<accession>P0CL01</accession>
<accession>P39818</accession>
<accession>Q9R766</accession>
<feature type="chain" id="PRO_0000100275" description="Cold shock-like protein CspJ">
    <location>
        <begin position="1"/>
        <end position="70"/>
    </location>
</feature>
<feature type="domain" description="CSD">
    <location>
        <begin position="7"/>
        <end position="67"/>
    </location>
</feature>
<comment type="subcellular location">
    <subcellularLocation>
        <location evidence="1">Cytoplasm</location>
    </subcellularLocation>
</comment>
<keyword id="KW-0010">Activator</keyword>
<keyword id="KW-0963">Cytoplasm</keyword>
<keyword id="KW-0238">DNA-binding</keyword>
<keyword id="KW-1185">Reference proteome</keyword>
<keyword id="KW-0346">Stress response</keyword>
<keyword id="KW-0804">Transcription</keyword>
<keyword id="KW-0805">Transcription regulation</keyword>
<evidence type="ECO:0000250" key="1"/>
<proteinExistence type="inferred from homology"/>
<sequence>MTTKITGLVKWFNPEKGFGFITPKDGSKDVFVHFSAIQSNEFRTLNENQEVEFSVEQGPKGPSAVNVVAL</sequence>
<reference key="1">
    <citation type="journal article" date="2001" name="Nature">
        <title>Complete genome sequence of Salmonella enterica serovar Typhimurium LT2.</title>
        <authorList>
            <person name="McClelland M."/>
            <person name="Sanderson K.E."/>
            <person name="Spieth J."/>
            <person name="Clifton S.W."/>
            <person name="Latreille P."/>
            <person name="Courtney L."/>
            <person name="Porwollik S."/>
            <person name="Ali J."/>
            <person name="Dante M."/>
            <person name="Du F."/>
            <person name="Hou S."/>
            <person name="Layman D."/>
            <person name="Leonard S."/>
            <person name="Nguyen C."/>
            <person name="Scott K."/>
            <person name="Holmes A."/>
            <person name="Grewal N."/>
            <person name="Mulvaney E."/>
            <person name="Ryan E."/>
            <person name="Sun H."/>
            <person name="Florea L."/>
            <person name="Miller W."/>
            <person name="Stoneking T."/>
            <person name="Nhan M."/>
            <person name="Waterston R."/>
            <person name="Wilson R.K."/>
        </authorList>
    </citation>
    <scope>NUCLEOTIDE SEQUENCE [LARGE SCALE GENOMIC DNA]</scope>
    <source>
        <strain>LT2 / SGSC1412 / ATCC 700720</strain>
    </source>
</reference>
<reference key="2">
    <citation type="journal article" date="1990" name="J. Bacteriol.">
        <title>Sequence analysis and mapping of the Salmonella typhimurium LT2 umuDC operon.</title>
        <authorList>
            <person name="Smith C.M."/>
            <person name="Koch W.H."/>
            <person name="Franklin S.B."/>
            <person name="Foster P.L."/>
            <person name="Cebula T.A."/>
            <person name="Eisenstadt E."/>
        </authorList>
    </citation>
    <scope>NUCLEOTIDE SEQUENCE [GENOMIC DNA] OF 1-40</scope>
    <source>
        <strain>LT2</strain>
    </source>
</reference>
<reference key="3">
    <citation type="journal article" date="1994" name="Nat. Genet.">
        <title>Large scale bacterial gene discovery by similarity search.</title>
        <authorList>
            <person name="Robison K."/>
            <person name="Gilbert W."/>
            <person name="Church G.M."/>
        </authorList>
    </citation>
    <scope>IDENTIFICATION</scope>
</reference>
<name>CSPJ_SALTY</name>
<dbReference type="EMBL" id="AE006468">
    <property type="protein sequence ID" value="AAL20906.1"/>
    <property type="molecule type" value="Genomic_DNA"/>
</dbReference>
<dbReference type="EMBL" id="M57431">
    <property type="status" value="NOT_ANNOTATED_CDS"/>
    <property type="molecule type" value="Genomic_DNA"/>
</dbReference>
<dbReference type="RefSeq" id="NP_460947.1">
    <property type="nucleotide sequence ID" value="NC_003197.2"/>
</dbReference>
<dbReference type="RefSeq" id="WP_000208509.1">
    <property type="nucleotide sequence ID" value="NC_003197.2"/>
</dbReference>
<dbReference type="SMR" id="P0CL01"/>
<dbReference type="STRING" id="99287.STM1996"/>
<dbReference type="PaxDb" id="99287-STM1996"/>
<dbReference type="GeneID" id="1253517"/>
<dbReference type="KEGG" id="stm:STM1996"/>
<dbReference type="PATRIC" id="fig|99287.12.peg.2113"/>
<dbReference type="HOGENOM" id="CLU_117621_2_1_6"/>
<dbReference type="OMA" id="DGQKVQF"/>
<dbReference type="PhylomeDB" id="P0CL01"/>
<dbReference type="BioCyc" id="SENT99287:STM1996-MONOMER"/>
<dbReference type="Proteomes" id="UP000001014">
    <property type="component" value="Chromosome"/>
</dbReference>
<dbReference type="GO" id="GO:0005829">
    <property type="term" value="C:cytosol"/>
    <property type="evidence" value="ECO:0007669"/>
    <property type="project" value="UniProtKB-ARBA"/>
</dbReference>
<dbReference type="GO" id="GO:0003677">
    <property type="term" value="F:DNA binding"/>
    <property type="evidence" value="ECO:0007669"/>
    <property type="project" value="UniProtKB-KW"/>
</dbReference>
<dbReference type="GO" id="GO:0003676">
    <property type="term" value="F:nucleic acid binding"/>
    <property type="evidence" value="ECO:0000318"/>
    <property type="project" value="GO_Central"/>
</dbReference>
<dbReference type="GO" id="GO:0010468">
    <property type="term" value="P:regulation of gene expression"/>
    <property type="evidence" value="ECO:0000318"/>
    <property type="project" value="GO_Central"/>
</dbReference>
<dbReference type="CDD" id="cd04458">
    <property type="entry name" value="CSP_CDS"/>
    <property type="match status" value="1"/>
</dbReference>
<dbReference type="FunFam" id="2.40.50.140:FF:000006">
    <property type="entry name" value="Cold shock protein CspC"/>
    <property type="match status" value="1"/>
</dbReference>
<dbReference type="Gene3D" id="2.40.50.140">
    <property type="entry name" value="Nucleic acid-binding proteins"/>
    <property type="match status" value="1"/>
</dbReference>
<dbReference type="InterPro" id="IPR012156">
    <property type="entry name" value="Cold_shock_CspA"/>
</dbReference>
<dbReference type="InterPro" id="IPR050181">
    <property type="entry name" value="Cold_shock_domain"/>
</dbReference>
<dbReference type="InterPro" id="IPR011129">
    <property type="entry name" value="CSD"/>
</dbReference>
<dbReference type="InterPro" id="IPR019844">
    <property type="entry name" value="CSD_CS"/>
</dbReference>
<dbReference type="InterPro" id="IPR002059">
    <property type="entry name" value="CSP_DNA-bd"/>
</dbReference>
<dbReference type="InterPro" id="IPR012340">
    <property type="entry name" value="NA-bd_OB-fold"/>
</dbReference>
<dbReference type="PANTHER" id="PTHR11544">
    <property type="entry name" value="COLD SHOCK DOMAIN CONTAINING PROTEINS"/>
    <property type="match status" value="1"/>
</dbReference>
<dbReference type="Pfam" id="PF00313">
    <property type="entry name" value="CSD"/>
    <property type="match status" value="1"/>
</dbReference>
<dbReference type="PIRSF" id="PIRSF002599">
    <property type="entry name" value="Cold_shock_A"/>
    <property type="match status" value="1"/>
</dbReference>
<dbReference type="PRINTS" id="PR00050">
    <property type="entry name" value="COLDSHOCK"/>
</dbReference>
<dbReference type="SMART" id="SM00357">
    <property type="entry name" value="CSP"/>
    <property type="match status" value="1"/>
</dbReference>
<dbReference type="SUPFAM" id="SSF50249">
    <property type="entry name" value="Nucleic acid-binding proteins"/>
    <property type="match status" value="1"/>
</dbReference>
<dbReference type="PROSITE" id="PS00352">
    <property type="entry name" value="CSD_1"/>
    <property type="match status" value="1"/>
</dbReference>
<dbReference type="PROSITE" id="PS51857">
    <property type="entry name" value="CSD_2"/>
    <property type="match status" value="1"/>
</dbReference>
<protein>
    <recommendedName>
        <fullName>Cold shock-like protein CspJ</fullName>
    </recommendedName>
</protein>
<gene>
    <name type="primary">cspJ</name>
    <name type="synonym">cspB</name>
    <name type="synonym">cspG</name>
    <name type="ordered locus">STM1996</name>
</gene>
<organism>
    <name type="scientific">Salmonella typhimurium (strain LT2 / SGSC1412 / ATCC 700720)</name>
    <dbReference type="NCBI Taxonomy" id="99287"/>
    <lineage>
        <taxon>Bacteria</taxon>
        <taxon>Pseudomonadati</taxon>
        <taxon>Pseudomonadota</taxon>
        <taxon>Gammaproteobacteria</taxon>
        <taxon>Enterobacterales</taxon>
        <taxon>Enterobacteriaceae</taxon>
        <taxon>Salmonella</taxon>
    </lineage>
</organism>